<protein>
    <recommendedName>
        <fullName evidence="1">Small ribosomal subunit protein uS11</fullName>
    </recommendedName>
    <alternativeName>
        <fullName evidence="3">30S ribosomal protein S11</fullName>
    </alternativeName>
</protein>
<organism>
    <name type="scientific">Methanopyrus kandleri (strain AV19 / DSM 6324 / JCM 9639 / NBRC 100938)</name>
    <dbReference type="NCBI Taxonomy" id="190192"/>
    <lineage>
        <taxon>Archaea</taxon>
        <taxon>Methanobacteriati</taxon>
        <taxon>Methanobacteriota</taxon>
        <taxon>Methanomada group</taxon>
        <taxon>Methanopyri</taxon>
        <taxon>Methanopyrales</taxon>
        <taxon>Methanopyraceae</taxon>
        <taxon>Methanopyrus</taxon>
    </lineage>
</organism>
<evidence type="ECO:0000255" key="1">
    <source>
        <dbReference type="HAMAP-Rule" id="MF_01310"/>
    </source>
</evidence>
<evidence type="ECO:0000256" key="2">
    <source>
        <dbReference type="SAM" id="MobiDB-lite"/>
    </source>
</evidence>
<evidence type="ECO:0000305" key="3"/>
<keyword id="KW-1185">Reference proteome</keyword>
<keyword id="KW-0687">Ribonucleoprotein</keyword>
<keyword id="KW-0689">Ribosomal protein</keyword>
<keyword id="KW-0694">RNA-binding</keyword>
<keyword id="KW-0699">rRNA-binding</keyword>
<name>RS11_METKA</name>
<proteinExistence type="inferred from homology"/>
<gene>
    <name evidence="1" type="primary">rps11</name>
    <name type="ordered locus">MK1473</name>
</gene>
<feature type="chain" id="PRO_0000123272" description="Small ribosomal subunit protein uS11">
    <location>
        <begin position="1"/>
        <end position="137"/>
    </location>
</feature>
<feature type="region of interest" description="Disordered" evidence="2">
    <location>
        <begin position="116"/>
        <end position="137"/>
    </location>
</feature>
<reference key="1">
    <citation type="journal article" date="2002" name="Proc. Natl. Acad. Sci. U.S.A.">
        <title>The complete genome of hyperthermophile Methanopyrus kandleri AV19 and monophyly of archaeal methanogens.</title>
        <authorList>
            <person name="Slesarev A.I."/>
            <person name="Mezhevaya K.V."/>
            <person name="Makarova K.S."/>
            <person name="Polushin N.N."/>
            <person name="Shcherbinina O.V."/>
            <person name="Shakhova V.V."/>
            <person name="Belova G.I."/>
            <person name="Aravind L."/>
            <person name="Natale D.A."/>
            <person name="Rogozin I.B."/>
            <person name="Tatusov R.L."/>
            <person name="Wolf Y.I."/>
            <person name="Stetter K.O."/>
            <person name="Malykh A.G."/>
            <person name="Koonin E.V."/>
            <person name="Kozyavkin S.A."/>
        </authorList>
    </citation>
    <scope>NUCLEOTIDE SEQUENCE [LARGE SCALE GENOMIC DNA]</scope>
    <source>
        <strain>AV19 / DSM 6324 / JCM 9639 / NBRC 100938</strain>
    </source>
</reference>
<accession>Q8TVB9</accession>
<dbReference type="EMBL" id="AE009439">
    <property type="protein sequence ID" value="AAM02686.1"/>
    <property type="molecule type" value="Genomic_DNA"/>
</dbReference>
<dbReference type="SMR" id="Q8TVB9"/>
<dbReference type="FunCoup" id="Q8TVB9">
    <property type="interactions" value="158"/>
</dbReference>
<dbReference type="STRING" id="190192.MK1473"/>
<dbReference type="PaxDb" id="190192-MK1473"/>
<dbReference type="EnsemblBacteria" id="AAM02686">
    <property type="protein sequence ID" value="AAM02686"/>
    <property type="gene ID" value="MK1473"/>
</dbReference>
<dbReference type="KEGG" id="mka:MK1473"/>
<dbReference type="PATRIC" id="fig|190192.8.peg.1629"/>
<dbReference type="HOGENOM" id="CLU_072439_6_1_2"/>
<dbReference type="InParanoid" id="Q8TVB9"/>
<dbReference type="OrthoDB" id="12054at2157"/>
<dbReference type="Proteomes" id="UP000001826">
    <property type="component" value="Chromosome"/>
</dbReference>
<dbReference type="GO" id="GO:1990904">
    <property type="term" value="C:ribonucleoprotein complex"/>
    <property type="evidence" value="ECO:0007669"/>
    <property type="project" value="UniProtKB-KW"/>
</dbReference>
<dbReference type="GO" id="GO:0005840">
    <property type="term" value="C:ribosome"/>
    <property type="evidence" value="ECO:0007669"/>
    <property type="project" value="UniProtKB-KW"/>
</dbReference>
<dbReference type="GO" id="GO:0019843">
    <property type="term" value="F:rRNA binding"/>
    <property type="evidence" value="ECO:0007669"/>
    <property type="project" value="UniProtKB-UniRule"/>
</dbReference>
<dbReference type="GO" id="GO:0003735">
    <property type="term" value="F:structural constituent of ribosome"/>
    <property type="evidence" value="ECO:0007669"/>
    <property type="project" value="InterPro"/>
</dbReference>
<dbReference type="GO" id="GO:0006412">
    <property type="term" value="P:translation"/>
    <property type="evidence" value="ECO:0007669"/>
    <property type="project" value="UniProtKB-UniRule"/>
</dbReference>
<dbReference type="FunFam" id="3.30.420.80:FF:000007">
    <property type="entry name" value="30S ribosomal protein S11"/>
    <property type="match status" value="1"/>
</dbReference>
<dbReference type="Gene3D" id="3.30.420.80">
    <property type="entry name" value="Ribosomal protein S11"/>
    <property type="match status" value="1"/>
</dbReference>
<dbReference type="HAMAP" id="MF_01310">
    <property type="entry name" value="Ribosomal_uS11"/>
    <property type="match status" value="1"/>
</dbReference>
<dbReference type="InterPro" id="IPR001971">
    <property type="entry name" value="Ribosomal_uS11"/>
</dbReference>
<dbReference type="InterPro" id="IPR019961">
    <property type="entry name" value="Ribosomal_uS11_archaeal"/>
</dbReference>
<dbReference type="InterPro" id="IPR018102">
    <property type="entry name" value="Ribosomal_uS11_CS"/>
</dbReference>
<dbReference type="InterPro" id="IPR036967">
    <property type="entry name" value="Ribosomal_uS11_sf"/>
</dbReference>
<dbReference type="NCBIfam" id="TIGR03628">
    <property type="entry name" value="arch_S11P"/>
    <property type="match status" value="1"/>
</dbReference>
<dbReference type="NCBIfam" id="NF007176">
    <property type="entry name" value="PRK09607.1"/>
    <property type="match status" value="1"/>
</dbReference>
<dbReference type="PANTHER" id="PTHR11759">
    <property type="entry name" value="40S RIBOSOMAL PROTEIN S14/30S RIBOSOMAL PROTEIN S11"/>
    <property type="match status" value="1"/>
</dbReference>
<dbReference type="Pfam" id="PF00411">
    <property type="entry name" value="Ribosomal_S11"/>
    <property type="match status" value="1"/>
</dbReference>
<dbReference type="PIRSF" id="PIRSF002131">
    <property type="entry name" value="Ribosomal_S11"/>
    <property type="match status" value="1"/>
</dbReference>
<dbReference type="SUPFAM" id="SSF53137">
    <property type="entry name" value="Translational machinery components"/>
    <property type="match status" value="1"/>
</dbReference>
<dbReference type="PROSITE" id="PS00054">
    <property type="entry name" value="RIBOSOMAL_S11"/>
    <property type="match status" value="1"/>
</dbReference>
<sequence length="137" mass="14696">MAEKEGKKEKKERWGIAHIYASFNNTIITITDLTGAETFARWSGGMVVDADREESSPYAAMKAARRAAEEAMEKGITAVHVKVRAPGGHGPKTPGPGAQAAIRALARAGLKIGRIEDVTPIPHDGTRRPGGKRGRRV</sequence>
<comment type="function">
    <text evidence="1">Located on the platform of the 30S subunit.</text>
</comment>
<comment type="subunit">
    <text evidence="1">Part of the 30S ribosomal subunit.</text>
</comment>
<comment type="similarity">
    <text evidence="1">Belongs to the universal ribosomal protein uS11 family.</text>
</comment>